<evidence type="ECO:0000255" key="1">
    <source>
        <dbReference type="HAMAP-Rule" id="MF_00188"/>
    </source>
</evidence>
<organism>
    <name type="scientific">Neisseria gonorrhoeae (strain NCCP11945)</name>
    <dbReference type="NCBI Taxonomy" id="521006"/>
    <lineage>
        <taxon>Bacteria</taxon>
        <taxon>Pseudomonadati</taxon>
        <taxon>Pseudomonadota</taxon>
        <taxon>Betaproteobacteria</taxon>
        <taxon>Neisseriales</taxon>
        <taxon>Neisseriaceae</taxon>
        <taxon>Neisseria</taxon>
    </lineage>
</organism>
<protein>
    <recommendedName>
        <fullName evidence="1">Protease HtpX homolog</fullName>
        <ecNumber evidence="1">3.4.24.-</ecNumber>
    </recommendedName>
</protein>
<keyword id="KW-0997">Cell inner membrane</keyword>
<keyword id="KW-1003">Cell membrane</keyword>
<keyword id="KW-0378">Hydrolase</keyword>
<keyword id="KW-0472">Membrane</keyword>
<keyword id="KW-0479">Metal-binding</keyword>
<keyword id="KW-0482">Metalloprotease</keyword>
<keyword id="KW-0645">Protease</keyword>
<keyword id="KW-0812">Transmembrane</keyword>
<keyword id="KW-1133">Transmembrane helix</keyword>
<keyword id="KW-0862">Zinc</keyword>
<reference key="1">
    <citation type="journal article" date="2008" name="J. Bacteriol.">
        <title>Complete genome sequence of Neisseria gonorrhoeae NCCP11945.</title>
        <authorList>
            <person name="Chung G.T."/>
            <person name="Yoo J.S."/>
            <person name="Oh H.B."/>
            <person name="Lee Y.S."/>
            <person name="Cha S.H."/>
            <person name="Kim S.J."/>
            <person name="Yoo C.K."/>
        </authorList>
    </citation>
    <scope>NUCLEOTIDE SEQUENCE [LARGE SCALE GENOMIC DNA]</scope>
    <source>
        <strain>NCCP11945</strain>
    </source>
</reference>
<accession>B4RKA0</accession>
<comment type="cofactor">
    <cofactor evidence="1">
        <name>Zn(2+)</name>
        <dbReference type="ChEBI" id="CHEBI:29105"/>
    </cofactor>
    <text evidence="1">Binds 1 zinc ion per subunit.</text>
</comment>
<comment type="subcellular location">
    <subcellularLocation>
        <location evidence="1">Cell inner membrane</location>
        <topology evidence="1">Multi-pass membrane protein</topology>
    </subcellularLocation>
</comment>
<comment type="similarity">
    <text evidence="1">Belongs to the peptidase M48B family.</text>
</comment>
<gene>
    <name evidence="1" type="primary">htpX</name>
    <name type="ordered locus">NGK_0560</name>
</gene>
<name>HTPX_NEIG2</name>
<dbReference type="EC" id="3.4.24.-" evidence="1"/>
<dbReference type="EMBL" id="CP001050">
    <property type="protein sequence ID" value="ACF29251.1"/>
    <property type="molecule type" value="Genomic_DNA"/>
</dbReference>
<dbReference type="RefSeq" id="WP_010357358.1">
    <property type="nucleotide sequence ID" value="NC_011035.1"/>
</dbReference>
<dbReference type="SMR" id="B4RKA0"/>
<dbReference type="MEROPS" id="M48.002"/>
<dbReference type="GeneID" id="66752737"/>
<dbReference type="KEGG" id="ngk:NGK_0560"/>
<dbReference type="HOGENOM" id="CLU_042266_1_0_4"/>
<dbReference type="Proteomes" id="UP000002564">
    <property type="component" value="Chromosome"/>
</dbReference>
<dbReference type="GO" id="GO:0005886">
    <property type="term" value="C:plasma membrane"/>
    <property type="evidence" value="ECO:0007669"/>
    <property type="project" value="UniProtKB-SubCell"/>
</dbReference>
<dbReference type="GO" id="GO:0004222">
    <property type="term" value="F:metalloendopeptidase activity"/>
    <property type="evidence" value="ECO:0007669"/>
    <property type="project" value="UniProtKB-UniRule"/>
</dbReference>
<dbReference type="GO" id="GO:0008270">
    <property type="term" value="F:zinc ion binding"/>
    <property type="evidence" value="ECO:0007669"/>
    <property type="project" value="UniProtKB-UniRule"/>
</dbReference>
<dbReference type="GO" id="GO:0006508">
    <property type="term" value="P:proteolysis"/>
    <property type="evidence" value="ECO:0007669"/>
    <property type="project" value="UniProtKB-KW"/>
</dbReference>
<dbReference type="CDD" id="cd07335">
    <property type="entry name" value="M48B_HtpX_like"/>
    <property type="match status" value="1"/>
</dbReference>
<dbReference type="Gene3D" id="3.30.2010.10">
    <property type="entry name" value="Metalloproteases ('zincins'), catalytic domain"/>
    <property type="match status" value="1"/>
</dbReference>
<dbReference type="HAMAP" id="MF_00188">
    <property type="entry name" value="Pept_M48_protease_HtpX"/>
    <property type="match status" value="1"/>
</dbReference>
<dbReference type="InterPro" id="IPR050083">
    <property type="entry name" value="HtpX_protease"/>
</dbReference>
<dbReference type="InterPro" id="IPR022919">
    <property type="entry name" value="Pept_M48_protease_HtpX"/>
</dbReference>
<dbReference type="InterPro" id="IPR001915">
    <property type="entry name" value="Peptidase_M48"/>
</dbReference>
<dbReference type="NCBIfam" id="NF003965">
    <property type="entry name" value="PRK05457.1"/>
    <property type="match status" value="1"/>
</dbReference>
<dbReference type="PANTHER" id="PTHR43221">
    <property type="entry name" value="PROTEASE HTPX"/>
    <property type="match status" value="1"/>
</dbReference>
<dbReference type="PANTHER" id="PTHR43221:SF1">
    <property type="entry name" value="PROTEASE HTPX"/>
    <property type="match status" value="1"/>
</dbReference>
<dbReference type="Pfam" id="PF01435">
    <property type="entry name" value="Peptidase_M48"/>
    <property type="match status" value="1"/>
</dbReference>
<dbReference type="PROSITE" id="PS00142">
    <property type="entry name" value="ZINC_PROTEASE"/>
    <property type="match status" value="1"/>
</dbReference>
<sequence>MKRIFLFLATNIAVLVVINIVLAVLGINSRGGAGSLLAYSAVVGFTGSIISLLMSKFIAKQSVGAEVIDTPRTEEEAWLLNTVEAQARQWNLKTPEVAIYHSPEPNAFATGASRNSSLIAVSTGLLDHMTRDEVEAVLAHEMAHVGNGDMVTLTLIQGVVNTFVVFLSRIIANLIARNNDGSQSQGTYFLVSMVFQILFGFLASLIVMWFSRQREYRADAGAAKLVGAPKMISALQRLKGNPVDLPEEMNAMGIAGDTRDSLLSTHPSLDNRIARLKSL</sequence>
<feature type="chain" id="PRO_1000098828" description="Protease HtpX homolog">
    <location>
        <begin position="1"/>
        <end position="279"/>
    </location>
</feature>
<feature type="transmembrane region" description="Helical" evidence="1">
    <location>
        <begin position="4"/>
        <end position="24"/>
    </location>
</feature>
<feature type="transmembrane region" description="Helical" evidence="1">
    <location>
        <begin position="34"/>
        <end position="54"/>
    </location>
</feature>
<feature type="transmembrane region" description="Helical" evidence="1">
    <location>
        <begin position="155"/>
        <end position="175"/>
    </location>
</feature>
<feature type="transmembrane region" description="Helical" evidence="1">
    <location>
        <begin position="189"/>
        <end position="209"/>
    </location>
</feature>
<feature type="active site" evidence="1">
    <location>
        <position position="141"/>
    </location>
</feature>
<feature type="binding site" evidence="1">
    <location>
        <position position="140"/>
    </location>
    <ligand>
        <name>Zn(2+)</name>
        <dbReference type="ChEBI" id="CHEBI:29105"/>
        <note>catalytic</note>
    </ligand>
</feature>
<feature type="binding site" evidence="1">
    <location>
        <position position="144"/>
    </location>
    <ligand>
        <name>Zn(2+)</name>
        <dbReference type="ChEBI" id="CHEBI:29105"/>
        <note>catalytic</note>
    </ligand>
</feature>
<feature type="binding site" evidence="1">
    <location>
        <position position="215"/>
    </location>
    <ligand>
        <name>Zn(2+)</name>
        <dbReference type="ChEBI" id="CHEBI:29105"/>
        <note>catalytic</note>
    </ligand>
</feature>
<proteinExistence type="inferred from homology"/>